<protein>
    <recommendedName>
        <fullName evidence="1">Small ribosomal subunit biogenesis GTPase RsgA</fullName>
        <ecNumber evidence="1">3.6.1.-</ecNumber>
    </recommendedName>
</protein>
<accession>B8I262</accession>
<sequence>MQLGIILKGIGGFYYVKQEKTEDIFECKPRGVFRKNSVTPLPGDRVGFSIIDGDKKLGNIDEILPRSSELVRPAVANVDQIAIIVAAKAPNPDYMLLDKLLITAETRNIRVLICVNKIDLDDDTAKIVRNAYSPAGYDVIEISSVRNIGYKRLKEELKGHITVFAGQSGVGKSTILNHIMESWVMETGSVSNKIERGKHTTRHAELLELKYGGYVADTPGFSSFEIIDIPYNQLERYYPEFLPYINTCRFNSCSHITEPGCRVIEALERSEIDNNRYQRYIQLYKALKDIPQYKGKKTESRRVIK</sequence>
<comment type="function">
    <text evidence="1">One of several proteins that assist in the late maturation steps of the functional core of the 30S ribosomal subunit. Helps release RbfA from mature subunits. May play a role in the assembly of ribosomal proteins into the subunit. Circularly permuted GTPase that catalyzes slow GTP hydrolysis, GTPase activity is stimulated by the 30S ribosomal subunit.</text>
</comment>
<comment type="cofactor">
    <cofactor evidence="1">
        <name>Zn(2+)</name>
        <dbReference type="ChEBI" id="CHEBI:29105"/>
    </cofactor>
    <text evidence="1">Binds 1 zinc ion per subunit.</text>
</comment>
<comment type="subunit">
    <text evidence="1">Monomer. Associates with 30S ribosomal subunit, binds 16S rRNA.</text>
</comment>
<comment type="subcellular location">
    <subcellularLocation>
        <location evidence="1">Cytoplasm</location>
    </subcellularLocation>
</comment>
<comment type="similarity">
    <text evidence="1">Belongs to the TRAFAC class YlqF/YawG GTPase family. RsgA subfamily.</text>
</comment>
<gene>
    <name evidence="1" type="primary">rsgA</name>
    <name type="ordered locus">Ccel_1536</name>
</gene>
<keyword id="KW-0963">Cytoplasm</keyword>
<keyword id="KW-0342">GTP-binding</keyword>
<keyword id="KW-0378">Hydrolase</keyword>
<keyword id="KW-0479">Metal-binding</keyword>
<keyword id="KW-0547">Nucleotide-binding</keyword>
<keyword id="KW-1185">Reference proteome</keyword>
<keyword id="KW-0690">Ribosome biogenesis</keyword>
<keyword id="KW-0694">RNA-binding</keyword>
<keyword id="KW-0699">rRNA-binding</keyword>
<keyword id="KW-0862">Zinc</keyword>
<organism>
    <name type="scientific">Ruminiclostridium cellulolyticum (strain ATCC 35319 / DSM 5812 / JCM 6584 / H10)</name>
    <name type="common">Clostridium cellulolyticum</name>
    <dbReference type="NCBI Taxonomy" id="394503"/>
    <lineage>
        <taxon>Bacteria</taxon>
        <taxon>Bacillati</taxon>
        <taxon>Bacillota</taxon>
        <taxon>Clostridia</taxon>
        <taxon>Eubacteriales</taxon>
        <taxon>Oscillospiraceae</taxon>
        <taxon>Ruminiclostridium</taxon>
    </lineage>
</organism>
<feature type="chain" id="PRO_1000188053" description="Small ribosomal subunit biogenesis GTPase RsgA">
    <location>
        <begin position="1"/>
        <end position="305"/>
    </location>
</feature>
<feature type="domain" description="CP-type G" evidence="2">
    <location>
        <begin position="67"/>
        <end position="224"/>
    </location>
</feature>
<feature type="binding site" evidence="1">
    <location>
        <begin position="116"/>
        <end position="119"/>
    </location>
    <ligand>
        <name>GTP</name>
        <dbReference type="ChEBI" id="CHEBI:37565"/>
    </ligand>
</feature>
<feature type="binding site" evidence="1">
    <location>
        <begin position="166"/>
        <end position="174"/>
    </location>
    <ligand>
        <name>GTP</name>
        <dbReference type="ChEBI" id="CHEBI:37565"/>
    </ligand>
</feature>
<feature type="binding site" evidence="1">
    <location>
        <position position="248"/>
    </location>
    <ligand>
        <name>Zn(2+)</name>
        <dbReference type="ChEBI" id="CHEBI:29105"/>
    </ligand>
</feature>
<feature type="binding site" evidence="1">
    <location>
        <position position="253"/>
    </location>
    <ligand>
        <name>Zn(2+)</name>
        <dbReference type="ChEBI" id="CHEBI:29105"/>
    </ligand>
</feature>
<feature type="binding site" evidence="1">
    <location>
        <position position="255"/>
    </location>
    <ligand>
        <name>Zn(2+)</name>
        <dbReference type="ChEBI" id="CHEBI:29105"/>
    </ligand>
</feature>
<feature type="binding site" evidence="1">
    <location>
        <position position="261"/>
    </location>
    <ligand>
        <name>Zn(2+)</name>
        <dbReference type="ChEBI" id="CHEBI:29105"/>
    </ligand>
</feature>
<dbReference type="EC" id="3.6.1.-" evidence="1"/>
<dbReference type="EMBL" id="CP001348">
    <property type="protein sequence ID" value="ACL75888.1"/>
    <property type="molecule type" value="Genomic_DNA"/>
</dbReference>
<dbReference type="RefSeq" id="WP_015925029.1">
    <property type="nucleotide sequence ID" value="NC_011898.1"/>
</dbReference>
<dbReference type="SMR" id="B8I262"/>
<dbReference type="STRING" id="394503.Ccel_1536"/>
<dbReference type="KEGG" id="cce:Ccel_1536"/>
<dbReference type="eggNOG" id="COG1162">
    <property type="taxonomic scope" value="Bacteria"/>
</dbReference>
<dbReference type="HOGENOM" id="CLU_033617_2_1_9"/>
<dbReference type="OrthoDB" id="9809485at2"/>
<dbReference type="Proteomes" id="UP000001349">
    <property type="component" value="Chromosome"/>
</dbReference>
<dbReference type="GO" id="GO:0005737">
    <property type="term" value="C:cytoplasm"/>
    <property type="evidence" value="ECO:0007669"/>
    <property type="project" value="UniProtKB-SubCell"/>
</dbReference>
<dbReference type="GO" id="GO:0005525">
    <property type="term" value="F:GTP binding"/>
    <property type="evidence" value="ECO:0007669"/>
    <property type="project" value="UniProtKB-UniRule"/>
</dbReference>
<dbReference type="GO" id="GO:0003924">
    <property type="term" value="F:GTPase activity"/>
    <property type="evidence" value="ECO:0007669"/>
    <property type="project" value="UniProtKB-UniRule"/>
</dbReference>
<dbReference type="GO" id="GO:0046872">
    <property type="term" value="F:metal ion binding"/>
    <property type="evidence" value="ECO:0007669"/>
    <property type="project" value="UniProtKB-KW"/>
</dbReference>
<dbReference type="GO" id="GO:0019843">
    <property type="term" value="F:rRNA binding"/>
    <property type="evidence" value="ECO:0007669"/>
    <property type="project" value="UniProtKB-KW"/>
</dbReference>
<dbReference type="GO" id="GO:0042274">
    <property type="term" value="P:ribosomal small subunit biogenesis"/>
    <property type="evidence" value="ECO:0007669"/>
    <property type="project" value="UniProtKB-UniRule"/>
</dbReference>
<dbReference type="CDD" id="cd04466">
    <property type="entry name" value="S1_YloQ_GTPase"/>
    <property type="match status" value="1"/>
</dbReference>
<dbReference type="CDD" id="cd01854">
    <property type="entry name" value="YjeQ_EngC"/>
    <property type="match status" value="1"/>
</dbReference>
<dbReference type="Gene3D" id="2.40.50.140">
    <property type="entry name" value="Nucleic acid-binding proteins"/>
    <property type="match status" value="1"/>
</dbReference>
<dbReference type="Gene3D" id="3.40.50.300">
    <property type="entry name" value="P-loop containing nucleotide triphosphate hydrolases"/>
    <property type="match status" value="1"/>
</dbReference>
<dbReference type="Gene3D" id="1.10.40.50">
    <property type="entry name" value="Probable gtpase engc, domain 3"/>
    <property type="match status" value="1"/>
</dbReference>
<dbReference type="HAMAP" id="MF_01820">
    <property type="entry name" value="GTPase_RsgA"/>
    <property type="match status" value="1"/>
</dbReference>
<dbReference type="InterPro" id="IPR030378">
    <property type="entry name" value="G_CP_dom"/>
</dbReference>
<dbReference type="InterPro" id="IPR012340">
    <property type="entry name" value="NA-bd_OB-fold"/>
</dbReference>
<dbReference type="InterPro" id="IPR027417">
    <property type="entry name" value="P-loop_NTPase"/>
</dbReference>
<dbReference type="InterPro" id="IPR004881">
    <property type="entry name" value="Ribosome_biogen_GTPase_RsgA"/>
</dbReference>
<dbReference type="InterPro" id="IPR010914">
    <property type="entry name" value="RsgA_GTPase_dom"/>
</dbReference>
<dbReference type="InterPro" id="IPR031944">
    <property type="entry name" value="RsgA_N"/>
</dbReference>
<dbReference type="NCBIfam" id="TIGR00157">
    <property type="entry name" value="ribosome small subunit-dependent GTPase A"/>
    <property type="match status" value="1"/>
</dbReference>
<dbReference type="PANTHER" id="PTHR32120">
    <property type="entry name" value="SMALL RIBOSOMAL SUBUNIT BIOGENESIS GTPASE RSGA"/>
    <property type="match status" value="1"/>
</dbReference>
<dbReference type="PANTHER" id="PTHR32120:SF11">
    <property type="entry name" value="SMALL RIBOSOMAL SUBUNIT BIOGENESIS GTPASE RSGA 1, MITOCHONDRIAL-RELATED"/>
    <property type="match status" value="1"/>
</dbReference>
<dbReference type="Pfam" id="PF03193">
    <property type="entry name" value="RsgA_GTPase"/>
    <property type="match status" value="1"/>
</dbReference>
<dbReference type="Pfam" id="PF16745">
    <property type="entry name" value="RsgA_N"/>
    <property type="match status" value="1"/>
</dbReference>
<dbReference type="SUPFAM" id="SSF50249">
    <property type="entry name" value="Nucleic acid-binding proteins"/>
    <property type="match status" value="1"/>
</dbReference>
<dbReference type="SUPFAM" id="SSF52540">
    <property type="entry name" value="P-loop containing nucleoside triphosphate hydrolases"/>
    <property type="match status" value="1"/>
</dbReference>
<dbReference type="PROSITE" id="PS50936">
    <property type="entry name" value="ENGC_GTPASE"/>
    <property type="match status" value="1"/>
</dbReference>
<dbReference type="PROSITE" id="PS51721">
    <property type="entry name" value="G_CP"/>
    <property type="match status" value="1"/>
</dbReference>
<reference key="1">
    <citation type="submission" date="2009-01" db="EMBL/GenBank/DDBJ databases">
        <title>Complete sequence of Clostridium cellulolyticum H10.</title>
        <authorList>
            <consortium name="US DOE Joint Genome Institute"/>
            <person name="Lucas S."/>
            <person name="Copeland A."/>
            <person name="Lapidus A."/>
            <person name="Glavina del Rio T."/>
            <person name="Dalin E."/>
            <person name="Tice H."/>
            <person name="Bruce D."/>
            <person name="Goodwin L."/>
            <person name="Pitluck S."/>
            <person name="Chertkov O."/>
            <person name="Saunders E."/>
            <person name="Brettin T."/>
            <person name="Detter J.C."/>
            <person name="Han C."/>
            <person name="Larimer F."/>
            <person name="Land M."/>
            <person name="Hauser L."/>
            <person name="Kyrpides N."/>
            <person name="Ivanova N."/>
            <person name="Zhou J."/>
            <person name="Richardson P."/>
        </authorList>
    </citation>
    <scope>NUCLEOTIDE SEQUENCE [LARGE SCALE GENOMIC DNA]</scope>
    <source>
        <strain>ATCC 35319 / DSM 5812 / JCM 6584 / H10</strain>
    </source>
</reference>
<name>RSGA_RUMCH</name>
<evidence type="ECO:0000255" key="1">
    <source>
        <dbReference type="HAMAP-Rule" id="MF_01820"/>
    </source>
</evidence>
<evidence type="ECO:0000255" key="2">
    <source>
        <dbReference type="PROSITE-ProRule" id="PRU01058"/>
    </source>
</evidence>
<proteinExistence type="inferred from homology"/>